<name>Y956_ARCFU</name>
<feature type="chain" id="PRO_0000127948" description="Uncharacterized protein AF_0956">
    <location>
        <begin position="1"/>
        <end position="59"/>
    </location>
</feature>
<accession>O29306</accession>
<protein>
    <recommendedName>
        <fullName>Uncharacterized protein AF_0956</fullName>
    </recommendedName>
</protein>
<reference key="1">
    <citation type="journal article" date="1997" name="Nature">
        <title>The complete genome sequence of the hyperthermophilic, sulphate-reducing archaeon Archaeoglobus fulgidus.</title>
        <authorList>
            <person name="Klenk H.-P."/>
            <person name="Clayton R.A."/>
            <person name="Tomb J.-F."/>
            <person name="White O."/>
            <person name="Nelson K.E."/>
            <person name="Ketchum K.A."/>
            <person name="Dodson R.J."/>
            <person name="Gwinn M.L."/>
            <person name="Hickey E.K."/>
            <person name="Peterson J.D."/>
            <person name="Richardson D.L."/>
            <person name="Kerlavage A.R."/>
            <person name="Graham D.E."/>
            <person name="Kyrpides N.C."/>
            <person name="Fleischmann R.D."/>
            <person name="Quackenbush J."/>
            <person name="Lee N.H."/>
            <person name="Sutton G.G."/>
            <person name="Gill S.R."/>
            <person name="Kirkness E.F."/>
            <person name="Dougherty B.A."/>
            <person name="McKenney K."/>
            <person name="Adams M.D."/>
            <person name="Loftus B.J."/>
            <person name="Peterson S.N."/>
            <person name="Reich C.I."/>
            <person name="McNeil L.K."/>
            <person name="Badger J.H."/>
            <person name="Glodek A."/>
            <person name="Zhou L."/>
            <person name="Overbeek R."/>
            <person name="Gocayne J.D."/>
            <person name="Weidman J.F."/>
            <person name="McDonald L.A."/>
            <person name="Utterback T.R."/>
            <person name="Cotton M.D."/>
            <person name="Spriggs T."/>
            <person name="Artiach P."/>
            <person name="Kaine B.P."/>
            <person name="Sykes S.M."/>
            <person name="Sadow P.W."/>
            <person name="D'Andrea K.P."/>
            <person name="Bowman C."/>
            <person name="Fujii C."/>
            <person name="Garland S.A."/>
            <person name="Mason T.M."/>
            <person name="Olsen G.J."/>
            <person name="Fraser C.M."/>
            <person name="Smith H.O."/>
            <person name="Woese C.R."/>
            <person name="Venter J.C."/>
        </authorList>
    </citation>
    <scope>NUCLEOTIDE SEQUENCE [LARGE SCALE GENOMIC DNA]</scope>
    <source>
        <strain>ATCC 49558 / DSM 4304 / JCM 9628 / NBRC 100126 / VC-16</strain>
    </source>
</reference>
<keyword id="KW-1185">Reference proteome</keyword>
<dbReference type="EMBL" id="AE000782">
    <property type="protein sequence ID" value="AAB90293.1"/>
    <property type="molecule type" value="Genomic_DNA"/>
</dbReference>
<dbReference type="PIR" id="D69369">
    <property type="entry name" value="D69369"/>
</dbReference>
<dbReference type="RefSeq" id="WP_010878456.1">
    <property type="nucleotide sequence ID" value="NC_000917.1"/>
</dbReference>
<dbReference type="SMR" id="O29306"/>
<dbReference type="STRING" id="224325.AF_0956"/>
<dbReference type="PaxDb" id="224325-AF_0956"/>
<dbReference type="EnsemblBacteria" id="AAB90293">
    <property type="protein sequence ID" value="AAB90293"/>
    <property type="gene ID" value="AF_0956"/>
</dbReference>
<dbReference type="GeneID" id="1484179"/>
<dbReference type="KEGG" id="afu:AF_0956"/>
<dbReference type="eggNOG" id="arCOG10226">
    <property type="taxonomic scope" value="Archaea"/>
</dbReference>
<dbReference type="HOGENOM" id="CLU_208207_0_0_2"/>
<dbReference type="Proteomes" id="UP000002199">
    <property type="component" value="Chromosome"/>
</dbReference>
<proteinExistence type="predicted"/>
<sequence>MNFIESFDMDDEEKEKLLEKLASQQLRADYRKALGSEHKRRYMDMEIEKIFKKGKKDER</sequence>
<organism>
    <name type="scientific">Archaeoglobus fulgidus (strain ATCC 49558 / DSM 4304 / JCM 9628 / NBRC 100126 / VC-16)</name>
    <dbReference type="NCBI Taxonomy" id="224325"/>
    <lineage>
        <taxon>Archaea</taxon>
        <taxon>Methanobacteriati</taxon>
        <taxon>Methanobacteriota</taxon>
        <taxon>Archaeoglobi</taxon>
        <taxon>Archaeoglobales</taxon>
        <taxon>Archaeoglobaceae</taxon>
        <taxon>Archaeoglobus</taxon>
    </lineage>
</organism>
<gene>
    <name type="ordered locus">AF_0956</name>
</gene>